<reference key="1">
    <citation type="journal article" date="2004" name="Nucleic Acids Res.">
        <title>Whole genome comparisons of serotype 4b and 1/2a strains of the food-borne pathogen Listeria monocytogenes reveal new insights into the core genome components of this species.</title>
        <authorList>
            <person name="Nelson K.E."/>
            <person name="Fouts D.E."/>
            <person name="Mongodin E.F."/>
            <person name="Ravel J."/>
            <person name="DeBoy R.T."/>
            <person name="Kolonay J.F."/>
            <person name="Rasko D.A."/>
            <person name="Angiuoli S.V."/>
            <person name="Gill S.R."/>
            <person name="Paulsen I.T."/>
            <person name="Peterson J.D."/>
            <person name="White O."/>
            <person name="Nelson W.C."/>
            <person name="Nierman W.C."/>
            <person name="Beanan M.J."/>
            <person name="Brinkac L.M."/>
            <person name="Daugherty S.C."/>
            <person name="Dodson R.J."/>
            <person name="Durkin A.S."/>
            <person name="Madupu R."/>
            <person name="Haft D.H."/>
            <person name="Selengut J."/>
            <person name="Van Aken S.E."/>
            <person name="Khouri H.M."/>
            <person name="Fedorova N."/>
            <person name="Forberger H.A."/>
            <person name="Tran B."/>
            <person name="Kathariou S."/>
            <person name="Wonderling L.D."/>
            <person name="Uhlich G.A."/>
            <person name="Bayles D.O."/>
            <person name="Luchansky J.B."/>
            <person name="Fraser C.M."/>
        </authorList>
    </citation>
    <scope>NUCLEOTIDE SEQUENCE [LARGE SCALE GENOMIC DNA]</scope>
    <source>
        <strain>F2365</strain>
    </source>
</reference>
<name>MCSB_LISMF</name>
<protein>
    <recommendedName>
        <fullName evidence="1">Protein-arginine kinase</fullName>
        <ecNumber evidence="1">2.7.14.1</ecNumber>
    </recommendedName>
</protein>
<sequence>MNVFEPRLSSWLENAGDDDDVVLSSRIRLARNLKDEQFPVYEQKEEIVDNIAEVFDDNFTLIKMNQISLLQKALLVEKHLISPYMMNKSEYGAVLLNEEENVSIMLNEEDHLRIQCMTPGLRLFDALEAALQIDGYVEEKLSYAFDKEFGYLTSCVTNIGTGMRASVMVHLPGLVTTKRIKSVIEAIRSLGFVVRGIYGEGSMPASNIFQVSNQVTLGKTETEIVEDLTQVMEQIIMQERVARTTIKQKFHIALEDRVFRSYGLLMNCRIISMKEASDAISDIRLGVELGFFEHISRQKMNELVLFSQPAFLRREAGRDMDELEEKVIRAKVIREILGDK</sequence>
<keyword id="KW-0067">ATP-binding</keyword>
<keyword id="KW-0418">Kinase</keyword>
<keyword id="KW-0547">Nucleotide-binding</keyword>
<keyword id="KW-0808">Transferase</keyword>
<accession>Q724I1</accession>
<gene>
    <name evidence="1" type="primary">mcsB</name>
    <name type="ordered locus">LMOf2365_0243</name>
</gene>
<organism>
    <name type="scientific">Listeria monocytogenes serotype 4b (strain F2365)</name>
    <dbReference type="NCBI Taxonomy" id="265669"/>
    <lineage>
        <taxon>Bacteria</taxon>
        <taxon>Bacillati</taxon>
        <taxon>Bacillota</taxon>
        <taxon>Bacilli</taxon>
        <taxon>Bacillales</taxon>
        <taxon>Listeriaceae</taxon>
        <taxon>Listeria</taxon>
    </lineage>
</organism>
<proteinExistence type="inferred from homology"/>
<dbReference type="EC" id="2.7.14.1" evidence="1"/>
<dbReference type="EMBL" id="AE017262">
    <property type="protein sequence ID" value="AAT03030.1"/>
    <property type="molecule type" value="Genomic_DNA"/>
</dbReference>
<dbReference type="RefSeq" id="WP_010958695.1">
    <property type="nucleotide sequence ID" value="NC_002973.6"/>
</dbReference>
<dbReference type="SMR" id="Q724I1"/>
<dbReference type="KEGG" id="lmf:LMOf2365_0243"/>
<dbReference type="HOGENOM" id="CLU_066591_1_0_9"/>
<dbReference type="GO" id="GO:0005615">
    <property type="term" value="C:extracellular space"/>
    <property type="evidence" value="ECO:0007669"/>
    <property type="project" value="TreeGrafter"/>
</dbReference>
<dbReference type="GO" id="GO:0005524">
    <property type="term" value="F:ATP binding"/>
    <property type="evidence" value="ECO:0007669"/>
    <property type="project" value="UniProtKB-KW"/>
</dbReference>
<dbReference type="GO" id="GO:0004111">
    <property type="term" value="F:creatine kinase activity"/>
    <property type="evidence" value="ECO:0007669"/>
    <property type="project" value="InterPro"/>
</dbReference>
<dbReference type="GO" id="GO:0004672">
    <property type="term" value="F:protein kinase activity"/>
    <property type="evidence" value="ECO:0007669"/>
    <property type="project" value="UniProtKB-UniRule"/>
</dbReference>
<dbReference type="GO" id="GO:0046314">
    <property type="term" value="P:phosphocreatine biosynthetic process"/>
    <property type="evidence" value="ECO:0007669"/>
    <property type="project" value="InterPro"/>
</dbReference>
<dbReference type="CDD" id="cd07930">
    <property type="entry name" value="bacterial_phosphagen_kinase"/>
    <property type="match status" value="1"/>
</dbReference>
<dbReference type="FunFam" id="3.30.590.10:FF:000007">
    <property type="entry name" value="Protein-arginine kinase"/>
    <property type="match status" value="1"/>
</dbReference>
<dbReference type="Gene3D" id="3.30.590.10">
    <property type="entry name" value="Glutamine synthetase/guanido kinase, catalytic domain"/>
    <property type="match status" value="1"/>
</dbReference>
<dbReference type="HAMAP" id="MF_00602">
    <property type="entry name" value="Prot_Arg_kinase"/>
    <property type="match status" value="1"/>
</dbReference>
<dbReference type="InterPro" id="IPR023660">
    <property type="entry name" value="Arg_Kinase"/>
</dbReference>
<dbReference type="InterPro" id="IPR000749">
    <property type="entry name" value="ATP-guanido_PTrfase"/>
</dbReference>
<dbReference type="InterPro" id="IPR022414">
    <property type="entry name" value="ATP-guanido_PTrfase_cat"/>
</dbReference>
<dbReference type="InterPro" id="IPR014746">
    <property type="entry name" value="Gln_synth/guanido_kin_cat_dom"/>
</dbReference>
<dbReference type="NCBIfam" id="NF002192">
    <property type="entry name" value="PRK01059.1-2"/>
    <property type="match status" value="1"/>
</dbReference>
<dbReference type="NCBIfam" id="NF002194">
    <property type="entry name" value="PRK01059.1-4"/>
    <property type="match status" value="1"/>
</dbReference>
<dbReference type="PANTHER" id="PTHR11547:SF38">
    <property type="entry name" value="ARGININE KINASE 1-RELATED"/>
    <property type="match status" value="1"/>
</dbReference>
<dbReference type="PANTHER" id="PTHR11547">
    <property type="entry name" value="ARGININE OR CREATINE KINASE"/>
    <property type="match status" value="1"/>
</dbReference>
<dbReference type="Pfam" id="PF00217">
    <property type="entry name" value="ATP-gua_Ptrans"/>
    <property type="match status" value="1"/>
</dbReference>
<dbReference type="SUPFAM" id="SSF55931">
    <property type="entry name" value="Glutamine synthetase/guanido kinase"/>
    <property type="match status" value="1"/>
</dbReference>
<dbReference type="PROSITE" id="PS51510">
    <property type="entry name" value="PHOSPHAGEN_KINASE_C"/>
    <property type="match status" value="1"/>
</dbReference>
<evidence type="ECO:0000255" key="1">
    <source>
        <dbReference type="HAMAP-Rule" id="MF_00602"/>
    </source>
</evidence>
<comment type="function">
    <text evidence="1">Catalyzes the specific phosphorylation of arginine residues in proteins.</text>
</comment>
<comment type="catalytic activity">
    <reaction evidence="1">
        <text>L-arginyl-[protein] + ATP = N(omega)-phospho-L-arginyl-[protein] + ADP + H(+)</text>
        <dbReference type="Rhea" id="RHEA:43384"/>
        <dbReference type="Rhea" id="RHEA-COMP:10532"/>
        <dbReference type="Rhea" id="RHEA-COMP:10533"/>
        <dbReference type="ChEBI" id="CHEBI:15378"/>
        <dbReference type="ChEBI" id="CHEBI:29965"/>
        <dbReference type="ChEBI" id="CHEBI:30616"/>
        <dbReference type="ChEBI" id="CHEBI:83226"/>
        <dbReference type="ChEBI" id="CHEBI:456216"/>
        <dbReference type="EC" id="2.7.14.1"/>
    </reaction>
</comment>
<comment type="similarity">
    <text evidence="1">Belongs to the ATP:guanido phosphotransferase family.</text>
</comment>
<feature type="chain" id="PRO_0000212025" description="Protein-arginine kinase">
    <location>
        <begin position="1"/>
        <end position="340"/>
    </location>
</feature>
<feature type="domain" description="Phosphagen kinase C-terminal" evidence="1">
    <location>
        <begin position="21"/>
        <end position="242"/>
    </location>
</feature>
<feature type="binding site" evidence="1">
    <location>
        <begin position="24"/>
        <end position="28"/>
    </location>
    <ligand>
        <name>ATP</name>
        <dbReference type="ChEBI" id="CHEBI:30616"/>
    </ligand>
</feature>
<feature type="binding site" evidence="1">
    <location>
        <position position="79"/>
    </location>
    <ligand>
        <name>ATP</name>
        <dbReference type="ChEBI" id="CHEBI:30616"/>
    </ligand>
</feature>
<feature type="binding site" evidence="1">
    <location>
        <position position="113"/>
    </location>
    <ligand>
        <name>ATP</name>
        <dbReference type="ChEBI" id="CHEBI:30616"/>
    </ligand>
</feature>
<feature type="binding site" evidence="1">
    <location>
        <begin position="164"/>
        <end position="168"/>
    </location>
    <ligand>
        <name>ATP</name>
        <dbReference type="ChEBI" id="CHEBI:30616"/>
    </ligand>
</feature>
<feature type="binding site" evidence="1">
    <location>
        <begin position="195"/>
        <end position="200"/>
    </location>
    <ligand>
        <name>ATP</name>
        <dbReference type="ChEBI" id="CHEBI:30616"/>
    </ligand>
</feature>